<keyword id="KW-0687">Ribonucleoprotein</keyword>
<keyword id="KW-0689">Ribosomal protein</keyword>
<keyword id="KW-0694">RNA-binding</keyword>
<keyword id="KW-0699">rRNA-binding</keyword>
<name>RL24_ALIFM</name>
<comment type="function">
    <text evidence="1">One of two assembly initiator proteins, it binds directly to the 5'-end of the 23S rRNA, where it nucleates assembly of the 50S subunit.</text>
</comment>
<comment type="function">
    <text evidence="1">One of the proteins that surrounds the polypeptide exit tunnel on the outside of the subunit.</text>
</comment>
<comment type="subunit">
    <text evidence="1">Part of the 50S ribosomal subunit.</text>
</comment>
<comment type="similarity">
    <text evidence="1">Belongs to the universal ribosomal protein uL24 family.</text>
</comment>
<gene>
    <name evidence="1" type="primary">rplX</name>
    <name type="ordered locus">VFMJ11_0236</name>
</gene>
<reference key="1">
    <citation type="submission" date="2008-08" db="EMBL/GenBank/DDBJ databases">
        <title>Complete sequence of Vibrio fischeri strain MJ11.</title>
        <authorList>
            <person name="Mandel M.J."/>
            <person name="Stabb E.V."/>
            <person name="Ruby E.G."/>
            <person name="Ferriera S."/>
            <person name="Johnson J."/>
            <person name="Kravitz S."/>
            <person name="Beeson K."/>
            <person name="Sutton G."/>
            <person name="Rogers Y.-H."/>
            <person name="Friedman R."/>
            <person name="Frazier M."/>
            <person name="Venter J.C."/>
        </authorList>
    </citation>
    <scope>NUCLEOTIDE SEQUENCE [LARGE SCALE GENOMIC DNA]</scope>
    <source>
        <strain>MJ11</strain>
    </source>
</reference>
<dbReference type="EMBL" id="CP001139">
    <property type="protein sequence ID" value="ACH65164.1"/>
    <property type="molecule type" value="Genomic_DNA"/>
</dbReference>
<dbReference type="RefSeq" id="WP_005417243.1">
    <property type="nucleotide sequence ID" value="NC_011184.1"/>
</dbReference>
<dbReference type="SMR" id="B5FG20"/>
<dbReference type="GeneID" id="54162869"/>
<dbReference type="KEGG" id="vfm:VFMJ11_0236"/>
<dbReference type="HOGENOM" id="CLU_093315_2_2_6"/>
<dbReference type="Proteomes" id="UP000001857">
    <property type="component" value="Chromosome I"/>
</dbReference>
<dbReference type="GO" id="GO:1990904">
    <property type="term" value="C:ribonucleoprotein complex"/>
    <property type="evidence" value="ECO:0007669"/>
    <property type="project" value="UniProtKB-KW"/>
</dbReference>
<dbReference type="GO" id="GO:0005840">
    <property type="term" value="C:ribosome"/>
    <property type="evidence" value="ECO:0007669"/>
    <property type="project" value="UniProtKB-KW"/>
</dbReference>
<dbReference type="GO" id="GO:0019843">
    <property type="term" value="F:rRNA binding"/>
    <property type="evidence" value="ECO:0007669"/>
    <property type="project" value="UniProtKB-UniRule"/>
</dbReference>
<dbReference type="GO" id="GO:0003735">
    <property type="term" value="F:structural constituent of ribosome"/>
    <property type="evidence" value="ECO:0007669"/>
    <property type="project" value="InterPro"/>
</dbReference>
<dbReference type="GO" id="GO:0006412">
    <property type="term" value="P:translation"/>
    <property type="evidence" value="ECO:0007669"/>
    <property type="project" value="UniProtKB-UniRule"/>
</dbReference>
<dbReference type="CDD" id="cd06089">
    <property type="entry name" value="KOW_RPL26"/>
    <property type="match status" value="1"/>
</dbReference>
<dbReference type="FunFam" id="2.30.30.30:FF:000004">
    <property type="entry name" value="50S ribosomal protein L24"/>
    <property type="match status" value="1"/>
</dbReference>
<dbReference type="Gene3D" id="2.30.30.30">
    <property type="match status" value="1"/>
</dbReference>
<dbReference type="HAMAP" id="MF_01326_B">
    <property type="entry name" value="Ribosomal_uL24_B"/>
    <property type="match status" value="1"/>
</dbReference>
<dbReference type="InterPro" id="IPR005824">
    <property type="entry name" value="KOW"/>
</dbReference>
<dbReference type="InterPro" id="IPR014722">
    <property type="entry name" value="Rib_uL2_dom2"/>
</dbReference>
<dbReference type="InterPro" id="IPR003256">
    <property type="entry name" value="Ribosomal_uL24"/>
</dbReference>
<dbReference type="InterPro" id="IPR005825">
    <property type="entry name" value="Ribosomal_uL24_CS"/>
</dbReference>
<dbReference type="InterPro" id="IPR041988">
    <property type="entry name" value="Ribosomal_uL24_KOW"/>
</dbReference>
<dbReference type="InterPro" id="IPR008991">
    <property type="entry name" value="Translation_prot_SH3-like_sf"/>
</dbReference>
<dbReference type="NCBIfam" id="TIGR01079">
    <property type="entry name" value="rplX_bact"/>
    <property type="match status" value="1"/>
</dbReference>
<dbReference type="PANTHER" id="PTHR12903">
    <property type="entry name" value="MITOCHONDRIAL RIBOSOMAL PROTEIN L24"/>
    <property type="match status" value="1"/>
</dbReference>
<dbReference type="Pfam" id="PF00467">
    <property type="entry name" value="KOW"/>
    <property type="match status" value="1"/>
</dbReference>
<dbReference type="Pfam" id="PF17136">
    <property type="entry name" value="ribosomal_L24"/>
    <property type="match status" value="1"/>
</dbReference>
<dbReference type="SMART" id="SM00739">
    <property type="entry name" value="KOW"/>
    <property type="match status" value="1"/>
</dbReference>
<dbReference type="SUPFAM" id="SSF50104">
    <property type="entry name" value="Translation proteins SH3-like domain"/>
    <property type="match status" value="1"/>
</dbReference>
<dbReference type="PROSITE" id="PS01108">
    <property type="entry name" value="RIBOSOMAL_L24"/>
    <property type="match status" value="1"/>
</dbReference>
<evidence type="ECO:0000255" key="1">
    <source>
        <dbReference type="HAMAP-Rule" id="MF_01326"/>
    </source>
</evidence>
<evidence type="ECO:0000305" key="2"/>
<proteinExistence type="inferred from homology"/>
<accession>B5FG20</accession>
<organism>
    <name type="scientific">Aliivibrio fischeri (strain MJ11)</name>
    <name type="common">Vibrio fischeri</name>
    <dbReference type="NCBI Taxonomy" id="388396"/>
    <lineage>
        <taxon>Bacteria</taxon>
        <taxon>Pseudomonadati</taxon>
        <taxon>Pseudomonadota</taxon>
        <taxon>Gammaproteobacteria</taxon>
        <taxon>Vibrionales</taxon>
        <taxon>Vibrionaceae</taxon>
        <taxon>Aliivibrio</taxon>
    </lineage>
</organism>
<protein>
    <recommendedName>
        <fullName evidence="1">Large ribosomal subunit protein uL24</fullName>
    </recommendedName>
    <alternativeName>
        <fullName evidence="2">50S ribosomal protein L24</fullName>
    </alternativeName>
</protein>
<feature type="chain" id="PRO_1000142052" description="Large ribosomal subunit protein uL24">
    <location>
        <begin position="1"/>
        <end position="104"/>
    </location>
</feature>
<sequence length="104" mass="11347">MAAKIRRNDEVIVLVGKDKGKKGKVTKVLETGKVIVEGINLVKKHQKPVPALGQQGGIVEKEAAIDASNIAIYNEATGKADRIGFRFEEGKKVRFFKSNGETIK</sequence>